<feature type="chain" id="PRO_0000082666" description="Ras-like protein 1">
    <location>
        <begin position="1"/>
        <end position="186"/>
    </location>
</feature>
<feature type="propeptide" id="PRO_0000281314" description="Removed in mature form" evidence="1">
    <location>
        <begin position="187"/>
        <end position="189"/>
    </location>
</feature>
<feature type="short sequence motif" description="Effector region">
    <location>
        <begin position="32"/>
        <end position="40"/>
    </location>
</feature>
<feature type="binding site" evidence="3">
    <location>
        <begin position="10"/>
        <end position="17"/>
    </location>
    <ligand>
        <name>GTP</name>
        <dbReference type="ChEBI" id="CHEBI:37565"/>
    </ligand>
</feature>
<feature type="binding site" evidence="3">
    <location>
        <begin position="57"/>
        <end position="61"/>
    </location>
    <ligand>
        <name>GTP</name>
        <dbReference type="ChEBI" id="CHEBI:37565"/>
    </ligand>
</feature>
<feature type="binding site" evidence="3">
    <location>
        <begin position="116"/>
        <end position="119"/>
    </location>
    <ligand>
        <name>GTP</name>
        <dbReference type="ChEBI" id="CHEBI:37565"/>
    </ligand>
</feature>
<feature type="modified residue" description="Cysteine methyl ester" evidence="1">
    <location>
        <position position="186"/>
    </location>
</feature>
<feature type="lipid moiety-binding region" description="S-geranylgeranyl cysteine" evidence="3">
    <location>
        <position position="186"/>
    </location>
</feature>
<sequence>MTEYKLVVVGAGGVGKSALTIQLIQNHFVDEYDPTIEDSYRKQVVIDGETCLLDILDTAGQEEYSAMRDQYMRTGEGFLLVFAVNSAKSFEDIGTYREQIKRVKDAEEVPMVLVGNKCDLASWNVNNEQAREVAKQYGIPYIETSAKTRMGVDDAFYTLVREIRKDKDNKGRRGRKMNKPNRRFKCKML</sequence>
<accession>P83832</accession>
<reference evidence="4" key="1">
    <citation type="journal article" date="1999" name="J. Mol. Evol.">
        <title>Absence of protein polymorphism in the Ras genes of Drosophila melanogaster.</title>
        <authorList>
            <person name="Gasperini R."/>
            <person name="Gibson G."/>
        </authorList>
    </citation>
    <scope>NUCLEOTIDE SEQUENCE [GENOMIC DNA]</scope>
</reference>
<dbReference type="EC" id="3.6.5.2" evidence="2"/>
<dbReference type="EMBL" id="AF186650">
    <property type="protein sequence ID" value="AAF15516.1"/>
    <property type="molecule type" value="Genomic_DNA"/>
</dbReference>
<dbReference type="SMR" id="P83832"/>
<dbReference type="EnsemblMetazoa" id="XM_033306388.1">
    <property type="protein sequence ID" value="XP_033162279.1"/>
    <property type="gene ID" value="LOC117142428"/>
</dbReference>
<dbReference type="Proteomes" id="UP000515162">
    <property type="component" value="Unplaced"/>
</dbReference>
<dbReference type="GO" id="GO:0005886">
    <property type="term" value="C:plasma membrane"/>
    <property type="evidence" value="ECO:0007669"/>
    <property type="project" value="UniProtKB-SubCell"/>
</dbReference>
<dbReference type="GO" id="GO:0003925">
    <property type="term" value="F:G protein activity"/>
    <property type="evidence" value="ECO:0007669"/>
    <property type="project" value="UniProtKB-EC"/>
</dbReference>
<dbReference type="GO" id="GO:0005525">
    <property type="term" value="F:GTP binding"/>
    <property type="evidence" value="ECO:0007669"/>
    <property type="project" value="UniProtKB-KW"/>
</dbReference>
<dbReference type="GO" id="GO:0007165">
    <property type="term" value="P:signal transduction"/>
    <property type="evidence" value="ECO:0007669"/>
    <property type="project" value="InterPro"/>
</dbReference>
<dbReference type="CDD" id="cd04138">
    <property type="entry name" value="H_N_K_Ras_like"/>
    <property type="match status" value="1"/>
</dbReference>
<dbReference type="FunFam" id="3.40.50.300:FF:000096">
    <property type="entry name" value="KRAS proto-oncogene, GTPase"/>
    <property type="match status" value="1"/>
</dbReference>
<dbReference type="Gene3D" id="3.40.50.300">
    <property type="entry name" value="P-loop containing nucleotide triphosphate hydrolases"/>
    <property type="match status" value="1"/>
</dbReference>
<dbReference type="InterPro" id="IPR027417">
    <property type="entry name" value="P-loop_NTPase"/>
</dbReference>
<dbReference type="InterPro" id="IPR005225">
    <property type="entry name" value="Small_GTP-bd"/>
</dbReference>
<dbReference type="InterPro" id="IPR001806">
    <property type="entry name" value="Small_GTPase"/>
</dbReference>
<dbReference type="InterPro" id="IPR020849">
    <property type="entry name" value="Small_GTPase_Ras-type"/>
</dbReference>
<dbReference type="NCBIfam" id="TIGR00231">
    <property type="entry name" value="small_GTP"/>
    <property type="match status" value="1"/>
</dbReference>
<dbReference type="PANTHER" id="PTHR24070">
    <property type="entry name" value="RAS, DI-RAS, AND RHEB FAMILY MEMBERS OF SMALL GTPASE SUPERFAMILY"/>
    <property type="match status" value="1"/>
</dbReference>
<dbReference type="Pfam" id="PF00071">
    <property type="entry name" value="Ras"/>
    <property type="match status" value="1"/>
</dbReference>
<dbReference type="PRINTS" id="PR00449">
    <property type="entry name" value="RASTRNSFRMNG"/>
</dbReference>
<dbReference type="SMART" id="SM00175">
    <property type="entry name" value="RAB"/>
    <property type="match status" value="1"/>
</dbReference>
<dbReference type="SMART" id="SM00176">
    <property type="entry name" value="RAN"/>
    <property type="match status" value="1"/>
</dbReference>
<dbReference type="SMART" id="SM00173">
    <property type="entry name" value="RAS"/>
    <property type="match status" value="1"/>
</dbReference>
<dbReference type="SMART" id="SM00174">
    <property type="entry name" value="RHO"/>
    <property type="match status" value="1"/>
</dbReference>
<dbReference type="SUPFAM" id="SSF52540">
    <property type="entry name" value="P-loop containing nucleoside triphosphate hydrolases"/>
    <property type="match status" value="1"/>
</dbReference>
<dbReference type="PROSITE" id="PS51421">
    <property type="entry name" value="RAS"/>
    <property type="match status" value="1"/>
</dbReference>
<proteinExistence type="inferred from homology"/>
<evidence type="ECO:0000250" key="1"/>
<evidence type="ECO:0000250" key="2">
    <source>
        <dbReference type="UniProtKB" id="P01112"/>
    </source>
</evidence>
<evidence type="ECO:0000250" key="3">
    <source>
        <dbReference type="UniProtKB" id="P08646"/>
    </source>
</evidence>
<evidence type="ECO:0000305" key="4"/>
<evidence type="ECO:0000312" key="5">
    <source>
        <dbReference type="EMBL" id="AAF15516.1"/>
    </source>
</evidence>
<name>RAS1_DROMA</name>
<gene>
    <name type="primary">Ras85D</name>
    <name type="synonym">Ras1</name>
</gene>
<comment type="function">
    <text evidence="2 3">Ras proteins bind GDP/GTP and possess intrinsic GTPase activity. Plays a role in eye development by regulating cell growth, survival of postmitotic ommatidial cells and differentiation of photoreceptor cells. During larval development, mediates Ptth/tor signaling leading to the production of ecdysone, a hormone required for the initiation of metamorphosis.</text>
</comment>
<comment type="catalytic activity">
    <reaction evidence="2">
        <text>GTP + H2O = GDP + phosphate + H(+)</text>
        <dbReference type="Rhea" id="RHEA:19669"/>
        <dbReference type="ChEBI" id="CHEBI:15377"/>
        <dbReference type="ChEBI" id="CHEBI:15378"/>
        <dbReference type="ChEBI" id="CHEBI:37565"/>
        <dbReference type="ChEBI" id="CHEBI:43474"/>
        <dbReference type="ChEBI" id="CHEBI:58189"/>
        <dbReference type="EC" id="3.6.5.2"/>
    </reaction>
</comment>
<comment type="activity regulation">
    <text>Alternates between an inactive form bound to GDP and an active form bound to GTP. Activated by a guanine nucleotide-exchange factor (GEF) and inactivated by a GTPase-activating protein (GAP).</text>
</comment>
<comment type="subcellular location">
    <subcellularLocation>
        <location evidence="1">Cell membrane</location>
        <topology evidence="1">Lipid-anchor</topology>
        <orientation evidence="1">Cytoplasmic side</orientation>
    </subcellularLocation>
</comment>
<comment type="similarity">
    <text evidence="4">Belongs to the small GTPase superfamily. Ras family.</text>
</comment>
<keyword id="KW-1003">Cell membrane</keyword>
<keyword id="KW-0342">GTP-binding</keyword>
<keyword id="KW-0378">Hydrolase</keyword>
<keyword id="KW-0449">Lipoprotein</keyword>
<keyword id="KW-0472">Membrane</keyword>
<keyword id="KW-0488">Methylation</keyword>
<keyword id="KW-0547">Nucleotide-binding</keyword>
<keyword id="KW-0636">Prenylation</keyword>
<protein>
    <recommendedName>
        <fullName>Ras-like protein 1</fullName>
        <ecNumber evidence="2">3.6.5.2</ecNumber>
    </recommendedName>
</protein>
<organism evidence="5">
    <name type="scientific">Drosophila mauritiana</name>
    <name type="common">Fruit fly</name>
    <dbReference type="NCBI Taxonomy" id="7226"/>
    <lineage>
        <taxon>Eukaryota</taxon>
        <taxon>Metazoa</taxon>
        <taxon>Ecdysozoa</taxon>
        <taxon>Arthropoda</taxon>
        <taxon>Hexapoda</taxon>
        <taxon>Insecta</taxon>
        <taxon>Pterygota</taxon>
        <taxon>Neoptera</taxon>
        <taxon>Endopterygota</taxon>
        <taxon>Diptera</taxon>
        <taxon>Brachycera</taxon>
        <taxon>Muscomorpha</taxon>
        <taxon>Ephydroidea</taxon>
        <taxon>Drosophilidae</taxon>
        <taxon>Drosophila</taxon>
        <taxon>Sophophora</taxon>
    </lineage>
</organism>